<protein>
    <recommendedName>
        <fullName evidence="1">5-oxoprolinase subunit A</fullName>
        <shortName evidence="1">5-OPase subunit A</shortName>
        <ecNumber evidence="1">3.5.2.9</ecNumber>
    </recommendedName>
    <alternativeName>
        <fullName evidence="1">5-oxoprolinase (ATP-hydrolyzing) subunit A</fullName>
    </alternativeName>
</protein>
<feature type="chain" id="PRO_0000184987" description="5-oxoprolinase subunit A">
    <location>
        <begin position="1"/>
        <end position="253"/>
    </location>
</feature>
<gene>
    <name evidence="1" type="primary">pxpA</name>
    <name type="ordered locus">BT9727_2847</name>
</gene>
<proteinExistence type="inferred from homology"/>
<comment type="function">
    <text evidence="1">Catalyzes the cleavage of 5-oxoproline to form L-glutamate coupled to the hydrolysis of ATP to ADP and inorganic phosphate.</text>
</comment>
<comment type="catalytic activity">
    <reaction evidence="1">
        <text>5-oxo-L-proline + ATP + 2 H2O = L-glutamate + ADP + phosphate + H(+)</text>
        <dbReference type="Rhea" id="RHEA:10348"/>
        <dbReference type="ChEBI" id="CHEBI:15377"/>
        <dbReference type="ChEBI" id="CHEBI:15378"/>
        <dbReference type="ChEBI" id="CHEBI:29985"/>
        <dbReference type="ChEBI" id="CHEBI:30616"/>
        <dbReference type="ChEBI" id="CHEBI:43474"/>
        <dbReference type="ChEBI" id="CHEBI:58402"/>
        <dbReference type="ChEBI" id="CHEBI:456216"/>
        <dbReference type="EC" id="3.5.2.9"/>
    </reaction>
</comment>
<comment type="subunit">
    <text evidence="1">Forms a complex composed of PxpA, PxpB and PxpC.</text>
</comment>
<comment type="similarity">
    <text evidence="1">Belongs to the LamB/PxpA family.</text>
</comment>
<evidence type="ECO:0000255" key="1">
    <source>
        <dbReference type="HAMAP-Rule" id="MF_00691"/>
    </source>
</evidence>
<organism>
    <name type="scientific">Bacillus thuringiensis subsp. konkukian (strain 97-27)</name>
    <dbReference type="NCBI Taxonomy" id="281309"/>
    <lineage>
        <taxon>Bacteria</taxon>
        <taxon>Bacillati</taxon>
        <taxon>Bacillota</taxon>
        <taxon>Bacilli</taxon>
        <taxon>Bacillales</taxon>
        <taxon>Bacillaceae</taxon>
        <taxon>Bacillus</taxon>
        <taxon>Bacillus cereus group</taxon>
    </lineage>
</organism>
<sequence>MTTIDLNCDLGESFGAYKMGNDDKILPFVSSINVACGFHAGDPSVMRQTVEKAMQHNVAIGAHPGFPDLIGFGRRNMNVSASEIYDYVLYQIGALDAFVKAAGGKMQHVKPHGALYNMAATNPEIADAIAKAIYHINPSLLLYGLANSEAFIQAAEKYNITLVQEAFADRTYKQDGTLTSRTEENALIKNEEEAIKQVLQMVKEGYVNSVNGEKVAVQAQTICLHGDGEKAVQFAKRIYRTFEHNGISICAPK</sequence>
<name>PXPA_BACHK</name>
<reference key="1">
    <citation type="journal article" date="2006" name="J. Bacteriol.">
        <title>Pathogenomic sequence analysis of Bacillus cereus and Bacillus thuringiensis isolates closely related to Bacillus anthracis.</title>
        <authorList>
            <person name="Han C.S."/>
            <person name="Xie G."/>
            <person name="Challacombe J.F."/>
            <person name="Altherr M.R."/>
            <person name="Bhotika S.S."/>
            <person name="Bruce D."/>
            <person name="Campbell C.S."/>
            <person name="Campbell M.L."/>
            <person name="Chen J."/>
            <person name="Chertkov O."/>
            <person name="Cleland C."/>
            <person name="Dimitrijevic M."/>
            <person name="Doggett N.A."/>
            <person name="Fawcett J.J."/>
            <person name="Glavina T."/>
            <person name="Goodwin L.A."/>
            <person name="Hill K.K."/>
            <person name="Hitchcock P."/>
            <person name="Jackson P.J."/>
            <person name="Keim P."/>
            <person name="Kewalramani A.R."/>
            <person name="Longmire J."/>
            <person name="Lucas S."/>
            <person name="Malfatti S."/>
            <person name="McMurry K."/>
            <person name="Meincke L.J."/>
            <person name="Misra M."/>
            <person name="Moseman B.L."/>
            <person name="Mundt M."/>
            <person name="Munk A.C."/>
            <person name="Okinaka R.T."/>
            <person name="Parson-Quintana B."/>
            <person name="Reilly L.P."/>
            <person name="Richardson P."/>
            <person name="Robinson D.L."/>
            <person name="Rubin E."/>
            <person name="Saunders E."/>
            <person name="Tapia R."/>
            <person name="Tesmer J.G."/>
            <person name="Thayer N."/>
            <person name="Thompson L.S."/>
            <person name="Tice H."/>
            <person name="Ticknor L.O."/>
            <person name="Wills P.L."/>
            <person name="Brettin T.S."/>
            <person name="Gilna P."/>
        </authorList>
    </citation>
    <scope>NUCLEOTIDE SEQUENCE [LARGE SCALE GENOMIC DNA]</scope>
    <source>
        <strain>97-27</strain>
    </source>
</reference>
<dbReference type="EC" id="3.5.2.9" evidence="1"/>
<dbReference type="EMBL" id="AE017355">
    <property type="protein sequence ID" value="AAT61738.1"/>
    <property type="molecule type" value="Genomic_DNA"/>
</dbReference>
<dbReference type="RefSeq" id="WP_000207350.1">
    <property type="nucleotide sequence ID" value="NC_005957.1"/>
</dbReference>
<dbReference type="RefSeq" id="YP_037171.1">
    <property type="nucleotide sequence ID" value="NC_005957.1"/>
</dbReference>
<dbReference type="SMR" id="Q6HH05"/>
<dbReference type="KEGG" id="btk:BT9727_2847"/>
<dbReference type="PATRIC" id="fig|281309.8.peg.3022"/>
<dbReference type="HOGENOM" id="CLU_069535_0_0_9"/>
<dbReference type="Proteomes" id="UP000001301">
    <property type="component" value="Chromosome"/>
</dbReference>
<dbReference type="GO" id="GO:0017168">
    <property type="term" value="F:5-oxoprolinase (ATP-hydrolyzing) activity"/>
    <property type="evidence" value="ECO:0007669"/>
    <property type="project" value="UniProtKB-UniRule"/>
</dbReference>
<dbReference type="GO" id="GO:0005524">
    <property type="term" value="F:ATP binding"/>
    <property type="evidence" value="ECO:0007669"/>
    <property type="project" value="UniProtKB-UniRule"/>
</dbReference>
<dbReference type="GO" id="GO:0005975">
    <property type="term" value="P:carbohydrate metabolic process"/>
    <property type="evidence" value="ECO:0007669"/>
    <property type="project" value="InterPro"/>
</dbReference>
<dbReference type="CDD" id="cd10787">
    <property type="entry name" value="LamB_YcsF_like"/>
    <property type="match status" value="1"/>
</dbReference>
<dbReference type="Gene3D" id="3.20.20.370">
    <property type="entry name" value="Glycoside hydrolase/deacetylase"/>
    <property type="match status" value="1"/>
</dbReference>
<dbReference type="HAMAP" id="MF_00691">
    <property type="entry name" value="PxpA"/>
    <property type="match status" value="1"/>
</dbReference>
<dbReference type="InterPro" id="IPR011330">
    <property type="entry name" value="Glyco_hydro/deAcase_b/a-brl"/>
</dbReference>
<dbReference type="InterPro" id="IPR005501">
    <property type="entry name" value="LamB/YcsF/PxpA-like"/>
</dbReference>
<dbReference type="NCBIfam" id="NF003813">
    <property type="entry name" value="PRK05406.1-2"/>
    <property type="match status" value="1"/>
</dbReference>
<dbReference type="NCBIfam" id="NF003814">
    <property type="entry name" value="PRK05406.1-3"/>
    <property type="match status" value="1"/>
</dbReference>
<dbReference type="NCBIfam" id="NF003816">
    <property type="entry name" value="PRK05406.1-5"/>
    <property type="match status" value="1"/>
</dbReference>
<dbReference type="PANTHER" id="PTHR30292:SF0">
    <property type="entry name" value="5-OXOPROLINASE SUBUNIT A"/>
    <property type="match status" value="1"/>
</dbReference>
<dbReference type="PANTHER" id="PTHR30292">
    <property type="entry name" value="UNCHARACTERIZED PROTEIN YBGL-RELATED"/>
    <property type="match status" value="1"/>
</dbReference>
<dbReference type="Pfam" id="PF03746">
    <property type="entry name" value="LamB_YcsF"/>
    <property type="match status" value="1"/>
</dbReference>
<dbReference type="SUPFAM" id="SSF88713">
    <property type="entry name" value="Glycoside hydrolase/deacetylase"/>
    <property type="match status" value="1"/>
</dbReference>
<keyword id="KW-0067">ATP-binding</keyword>
<keyword id="KW-0378">Hydrolase</keyword>
<keyword id="KW-0547">Nucleotide-binding</keyword>
<accession>Q6HH05</accession>